<comment type="function">
    <text evidence="1">Transfers and isomerizes the ribose moiety from AdoMet to the 7-aminomethyl group of 7-deazaguanine (preQ1-tRNA) to give epoxyqueuosine (oQ-tRNA).</text>
</comment>
<comment type="catalytic activity">
    <reaction evidence="1">
        <text>7-aminomethyl-7-carbaguanosine(34) in tRNA + S-adenosyl-L-methionine = epoxyqueuosine(34) in tRNA + adenine + L-methionine + 2 H(+)</text>
        <dbReference type="Rhea" id="RHEA:32155"/>
        <dbReference type="Rhea" id="RHEA-COMP:10342"/>
        <dbReference type="Rhea" id="RHEA-COMP:18582"/>
        <dbReference type="ChEBI" id="CHEBI:15378"/>
        <dbReference type="ChEBI" id="CHEBI:16708"/>
        <dbReference type="ChEBI" id="CHEBI:57844"/>
        <dbReference type="ChEBI" id="CHEBI:59789"/>
        <dbReference type="ChEBI" id="CHEBI:82833"/>
        <dbReference type="ChEBI" id="CHEBI:194443"/>
        <dbReference type="EC" id="2.4.99.17"/>
    </reaction>
</comment>
<comment type="pathway">
    <text evidence="1">tRNA modification; tRNA-queuosine biosynthesis.</text>
</comment>
<comment type="subunit">
    <text evidence="1">Monomer.</text>
</comment>
<comment type="subcellular location">
    <subcellularLocation>
        <location evidence="1">Cytoplasm</location>
    </subcellularLocation>
</comment>
<comment type="similarity">
    <text evidence="1">Belongs to the QueA family.</text>
</comment>
<comment type="sequence caution" evidence="2">
    <conflict type="erroneous initiation">
        <sequence resource="EMBL-CDS" id="AAO04922"/>
    </conflict>
</comment>
<reference key="1">
    <citation type="journal article" date="2003" name="Mol. Microbiol.">
        <title>Genome-based analysis of virulence genes in a non-biofilm-forming Staphylococcus epidermidis strain (ATCC 12228).</title>
        <authorList>
            <person name="Zhang Y.-Q."/>
            <person name="Ren S.-X."/>
            <person name="Li H.-L."/>
            <person name="Wang Y.-X."/>
            <person name="Fu G."/>
            <person name="Yang J."/>
            <person name="Qin Z.-Q."/>
            <person name="Miao Y.-G."/>
            <person name="Wang W.-Y."/>
            <person name="Chen R.-S."/>
            <person name="Shen Y."/>
            <person name="Chen Z."/>
            <person name="Yuan Z.-H."/>
            <person name="Zhao G.-P."/>
            <person name="Qu D."/>
            <person name="Danchin A."/>
            <person name="Wen Y.-M."/>
        </authorList>
    </citation>
    <scope>NUCLEOTIDE SEQUENCE [LARGE SCALE GENOMIC DNA]</scope>
    <source>
        <strain>ATCC 12228 / FDA PCI 1200</strain>
    </source>
</reference>
<feature type="chain" id="PRO_0000165444" description="S-adenosylmethionine:tRNA ribosyltransferase-isomerase">
    <location>
        <begin position="1"/>
        <end position="341"/>
    </location>
</feature>
<keyword id="KW-0963">Cytoplasm</keyword>
<keyword id="KW-0671">Queuosine biosynthesis</keyword>
<keyword id="KW-0949">S-adenosyl-L-methionine</keyword>
<keyword id="KW-0808">Transferase</keyword>
<sequence length="341" mass="39003">MNIEDFDYHLPESLIAQTPLKNRDQSRLLVLSKDTGELTHLHFRDVIHYFEPGDTLVLNDTRVMPARLFGLKEETGAKVEMLMLTQIEGNDWEVLLKPAKRIKKGHRLNFGDGKIVAECIEELEQGGRIMRLHYEGILQERLDELGEMPLPPYIKERLDDPDRYQTVYAKESGSAAAPTAGLHFTDDLLNKIKQKGVHIAFITLHVGLGTFRPVSVENIDDHEMHSEYYQMTQETADLLNKTKESGKRVISVGTTSTRTLETIRRDHPQFVATSGWTDIFIYPGFEFKAIDGLITNFHLPKSTLVMLVSAFSNKKYILNAYHKAVEMEYRFFSFGDAMLII</sequence>
<accession>Q8CS92</accession>
<evidence type="ECO:0000255" key="1">
    <source>
        <dbReference type="HAMAP-Rule" id="MF_00113"/>
    </source>
</evidence>
<evidence type="ECO:0000305" key="2"/>
<dbReference type="EC" id="2.4.99.17" evidence="1"/>
<dbReference type="EMBL" id="AE015929">
    <property type="protein sequence ID" value="AAO04922.1"/>
    <property type="status" value="ALT_INIT"/>
    <property type="molecule type" value="Genomic_DNA"/>
</dbReference>
<dbReference type="RefSeq" id="NP_764878.1">
    <property type="nucleotide sequence ID" value="NC_004461.1"/>
</dbReference>
<dbReference type="RefSeq" id="WP_001830755.1">
    <property type="nucleotide sequence ID" value="NZ_WBME01000016.1"/>
</dbReference>
<dbReference type="SMR" id="Q8CS92"/>
<dbReference type="GeneID" id="50018562"/>
<dbReference type="KEGG" id="sep:SE_1323"/>
<dbReference type="PATRIC" id="fig|176280.10.peg.1292"/>
<dbReference type="eggNOG" id="COG0809">
    <property type="taxonomic scope" value="Bacteria"/>
</dbReference>
<dbReference type="HOGENOM" id="CLU_039110_1_0_9"/>
<dbReference type="OrthoDB" id="9805933at2"/>
<dbReference type="UniPathway" id="UPA00392"/>
<dbReference type="Proteomes" id="UP000001411">
    <property type="component" value="Chromosome"/>
</dbReference>
<dbReference type="GO" id="GO:0005737">
    <property type="term" value="C:cytoplasm"/>
    <property type="evidence" value="ECO:0007669"/>
    <property type="project" value="UniProtKB-SubCell"/>
</dbReference>
<dbReference type="GO" id="GO:0051075">
    <property type="term" value="F:S-adenosylmethionine:tRNA ribosyltransferase-isomerase activity"/>
    <property type="evidence" value="ECO:0007669"/>
    <property type="project" value="UniProtKB-EC"/>
</dbReference>
<dbReference type="GO" id="GO:0008616">
    <property type="term" value="P:queuosine biosynthetic process"/>
    <property type="evidence" value="ECO:0007669"/>
    <property type="project" value="UniProtKB-UniRule"/>
</dbReference>
<dbReference type="GO" id="GO:0002099">
    <property type="term" value="P:tRNA wobble guanine modification"/>
    <property type="evidence" value="ECO:0007669"/>
    <property type="project" value="TreeGrafter"/>
</dbReference>
<dbReference type="FunFam" id="2.40.10.240:FF:000002">
    <property type="entry name" value="S-adenosylmethionine:tRNA ribosyltransferase-isomerase"/>
    <property type="match status" value="1"/>
</dbReference>
<dbReference type="FunFam" id="3.40.1780.10:FF:000001">
    <property type="entry name" value="S-adenosylmethionine:tRNA ribosyltransferase-isomerase"/>
    <property type="match status" value="1"/>
</dbReference>
<dbReference type="Gene3D" id="2.40.10.240">
    <property type="entry name" value="QueA-like"/>
    <property type="match status" value="1"/>
</dbReference>
<dbReference type="Gene3D" id="3.40.1780.10">
    <property type="entry name" value="QueA-like"/>
    <property type="match status" value="1"/>
</dbReference>
<dbReference type="HAMAP" id="MF_00113">
    <property type="entry name" value="QueA"/>
    <property type="match status" value="1"/>
</dbReference>
<dbReference type="InterPro" id="IPR003699">
    <property type="entry name" value="QueA"/>
</dbReference>
<dbReference type="InterPro" id="IPR042118">
    <property type="entry name" value="QueA_dom1"/>
</dbReference>
<dbReference type="InterPro" id="IPR042119">
    <property type="entry name" value="QueA_dom2"/>
</dbReference>
<dbReference type="InterPro" id="IPR036100">
    <property type="entry name" value="QueA_sf"/>
</dbReference>
<dbReference type="NCBIfam" id="NF001140">
    <property type="entry name" value="PRK00147.1"/>
    <property type="match status" value="1"/>
</dbReference>
<dbReference type="NCBIfam" id="TIGR00113">
    <property type="entry name" value="queA"/>
    <property type="match status" value="1"/>
</dbReference>
<dbReference type="PANTHER" id="PTHR30307">
    <property type="entry name" value="S-ADENOSYLMETHIONINE:TRNA RIBOSYLTRANSFERASE-ISOMERASE"/>
    <property type="match status" value="1"/>
</dbReference>
<dbReference type="PANTHER" id="PTHR30307:SF0">
    <property type="entry name" value="S-ADENOSYLMETHIONINE:TRNA RIBOSYLTRANSFERASE-ISOMERASE"/>
    <property type="match status" value="1"/>
</dbReference>
<dbReference type="Pfam" id="PF02547">
    <property type="entry name" value="Queuosine_synth"/>
    <property type="match status" value="1"/>
</dbReference>
<dbReference type="SUPFAM" id="SSF111337">
    <property type="entry name" value="QueA-like"/>
    <property type="match status" value="1"/>
</dbReference>
<protein>
    <recommendedName>
        <fullName evidence="1">S-adenosylmethionine:tRNA ribosyltransferase-isomerase</fullName>
        <ecNumber evidence="1">2.4.99.17</ecNumber>
    </recommendedName>
    <alternativeName>
        <fullName evidence="1">Queuosine biosynthesis protein QueA</fullName>
    </alternativeName>
</protein>
<gene>
    <name evidence="1" type="primary">queA</name>
    <name type="ordered locus">SE_1323</name>
</gene>
<name>QUEA_STAES</name>
<organism>
    <name type="scientific">Staphylococcus epidermidis (strain ATCC 12228 / FDA PCI 1200)</name>
    <dbReference type="NCBI Taxonomy" id="176280"/>
    <lineage>
        <taxon>Bacteria</taxon>
        <taxon>Bacillati</taxon>
        <taxon>Bacillota</taxon>
        <taxon>Bacilli</taxon>
        <taxon>Bacillales</taxon>
        <taxon>Staphylococcaceae</taxon>
        <taxon>Staphylococcus</taxon>
    </lineage>
</organism>
<proteinExistence type="inferred from homology"/>